<keyword id="KW-0030">Aminoacyl-tRNA synthetase</keyword>
<keyword id="KW-0067">ATP-binding</keyword>
<keyword id="KW-0963">Cytoplasm</keyword>
<keyword id="KW-0436">Ligase</keyword>
<keyword id="KW-0547">Nucleotide-binding</keyword>
<keyword id="KW-0648">Protein biosynthesis</keyword>
<keyword id="KW-1185">Reference proteome</keyword>
<reference key="1">
    <citation type="submission" date="2008-03" db="EMBL/GenBank/DDBJ databases">
        <title>Complete sequence of Leptothrix cholodnii SP-6.</title>
        <authorList>
            <consortium name="US DOE Joint Genome Institute"/>
            <person name="Copeland A."/>
            <person name="Lucas S."/>
            <person name="Lapidus A."/>
            <person name="Glavina del Rio T."/>
            <person name="Dalin E."/>
            <person name="Tice H."/>
            <person name="Bruce D."/>
            <person name="Goodwin L."/>
            <person name="Pitluck S."/>
            <person name="Chertkov O."/>
            <person name="Brettin T."/>
            <person name="Detter J.C."/>
            <person name="Han C."/>
            <person name="Kuske C.R."/>
            <person name="Schmutz J."/>
            <person name="Larimer F."/>
            <person name="Land M."/>
            <person name="Hauser L."/>
            <person name="Kyrpides N."/>
            <person name="Lykidis A."/>
            <person name="Emerson D."/>
            <person name="Richardson P."/>
        </authorList>
    </citation>
    <scope>NUCLEOTIDE SEQUENCE [LARGE SCALE GENOMIC DNA]</scope>
    <source>
        <strain>ATCC 51168 / LMG 8142 / SP-6</strain>
    </source>
</reference>
<feature type="chain" id="PRO_1000098088" description="Serine--tRNA ligase">
    <location>
        <begin position="1"/>
        <end position="431"/>
    </location>
</feature>
<feature type="binding site" evidence="1">
    <location>
        <begin position="238"/>
        <end position="240"/>
    </location>
    <ligand>
        <name>L-serine</name>
        <dbReference type="ChEBI" id="CHEBI:33384"/>
    </ligand>
</feature>
<feature type="binding site" evidence="1">
    <location>
        <begin position="269"/>
        <end position="271"/>
    </location>
    <ligand>
        <name>ATP</name>
        <dbReference type="ChEBI" id="CHEBI:30616"/>
    </ligand>
</feature>
<feature type="binding site" evidence="1">
    <location>
        <position position="292"/>
    </location>
    <ligand>
        <name>L-serine</name>
        <dbReference type="ChEBI" id="CHEBI:33384"/>
    </ligand>
</feature>
<feature type="binding site" evidence="1">
    <location>
        <begin position="356"/>
        <end position="359"/>
    </location>
    <ligand>
        <name>ATP</name>
        <dbReference type="ChEBI" id="CHEBI:30616"/>
    </ligand>
</feature>
<feature type="binding site" evidence="1">
    <location>
        <position position="391"/>
    </location>
    <ligand>
        <name>L-serine</name>
        <dbReference type="ChEBI" id="CHEBI:33384"/>
    </ligand>
</feature>
<comment type="function">
    <text evidence="1">Catalyzes the attachment of serine to tRNA(Ser). Is also able to aminoacylate tRNA(Sec) with serine, to form the misacylated tRNA L-seryl-tRNA(Sec), which will be further converted into selenocysteinyl-tRNA(Sec).</text>
</comment>
<comment type="catalytic activity">
    <reaction evidence="1">
        <text>tRNA(Ser) + L-serine + ATP = L-seryl-tRNA(Ser) + AMP + diphosphate + H(+)</text>
        <dbReference type="Rhea" id="RHEA:12292"/>
        <dbReference type="Rhea" id="RHEA-COMP:9669"/>
        <dbReference type="Rhea" id="RHEA-COMP:9703"/>
        <dbReference type="ChEBI" id="CHEBI:15378"/>
        <dbReference type="ChEBI" id="CHEBI:30616"/>
        <dbReference type="ChEBI" id="CHEBI:33019"/>
        <dbReference type="ChEBI" id="CHEBI:33384"/>
        <dbReference type="ChEBI" id="CHEBI:78442"/>
        <dbReference type="ChEBI" id="CHEBI:78533"/>
        <dbReference type="ChEBI" id="CHEBI:456215"/>
        <dbReference type="EC" id="6.1.1.11"/>
    </reaction>
</comment>
<comment type="catalytic activity">
    <reaction evidence="1">
        <text>tRNA(Sec) + L-serine + ATP = L-seryl-tRNA(Sec) + AMP + diphosphate + H(+)</text>
        <dbReference type="Rhea" id="RHEA:42580"/>
        <dbReference type="Rhea" id="RHEA-COMP:9742"/>
        <dbReference type="Rhea" id="RHEA-COMP:10128"/>
        <dbReference type="ChEBI" id="CHEBI:15378"/>
        <dbReference type="ChEBI" id="CHEBI:30616"/>
        <dbReference type="ChEBI" id="CHEBI:33019"/>
        <dbReference type="ChEBI" id="CHEBI:33384"/>
        <dbReference type="ChEBI" id="CHEBI:78442"/>
        <dbReference type="ChEBI" id="CHEBI:78533"/>
        <dbReference type="ChEBI" id="CHEBI:456215"/>
        <dbReference type="EC" id="6.1.1.11"/>
    </reaction>
</comment>
<comment type="pathway">
    <text evidence="1">Aminoacyl-tRNA biosynthesis; selenocysteinyl-tRNA(Sec) biosynthesis; L-seryl-tRNA(Sec) from L-serine and tRNA(Sec): step 1/1.</text>
</comment>
<comment type="subunit">
    <text evidence="1">Homodimer. The tRNA molecule binds across the dimer.</text>
</comment>
<comment type="subcellular location">
    <subcellularLocation>
        <location evidence="1">Cytoplasm</location>
    </subcellularLocation>
</comment>
<comment type="domain">
    <text evidence="1">Consists of two distinct domains, a catalytic core and a N-terminal extension that is involved in tRNA binding.</text>
</comment>
<comment type="similarity">
    <text evidence="1">Belongs to the class-II aminoacyl-tRNA synthetase family. Type-1 seryl-tRNA synthetase subfamily.</text>
</comment>
<name>SYS_LEPCP</name>
<organism>
    <name type="scientific">Leptothrix cholodnii (strain ATCC 51168 / LMG 8142 / SP-6)</name>
    <name type="common">Leptothrix discophora (strain SP-6)</name>
    <dbReference type="NCBI Taxonomy" id="395495"/>
    <lineage>
        <taxon>Bacteria</taxon>
        <taxon>Pseudomonadati</taxon>
        <taxon>Pseudomonadota</taxon>
        <taxon>Betaproteobacteria</taxon>
        <taxon>Burkholderiales</taxon>
        <taxon>Sphaerotilaceae</taxon>
        <taxon>Leptothrix</taxon>
    </lineage>
</organism>
<dbReference type="EC" id="6.1.1.11" evidence="1"/>
<dbReference type="EMBL" id="CP001013">
    <property type="protein sequence ID" value="ACB32967.1"/>
    <property type="molecule type" value="Genomic_DNA"/>
</dbReference>
<dbReference type="RefSeq" id="WP_012345729.1">
    <property type="nucleotide sequence ID" value="NC_010524.1"/>
</dbReference>
<dbReference type="SMR" id="B1Y0I6"/>
<dbReference type="STRING" id="395495.Lcho_0692"/>
<dbReference type="KEGG" id="lch:Lcho_0692"/>
<dbReference type="eggNOG" id="COG0172">
    <property type="taxonomic scope" value="Bacteria"/>
</dbReference>
<dbReference type="HOGENOM" id="CLU_023797_1_1_4"/>
<dbReference type="OrthoDB" id="9804647at2"/>
<dbReference type="UniPathway" id="UPA00906">
    <property type="reaction ID" value="UER00895"/>
</dbReference>
<dbReference type="Proteomes" id="UP000001693">
    <property type="component" value="Chromosome"/>
</dbReference>
<dbReference type="GO" id="GO:0005737">
    <property type="term" value="C:cytoplasm"/>
    <property type="evidence" value="ECO:0007669"/>
    <property type="project" value="UniProtKB-SubCell"/>
</dbReference>
<dbReference type="GO" id="GO:0005524">
    <property type="term" value="F:ATP binding"/>
    <property type="evidence" value="ECO:0007669"/>
    <property type="project" value="UniProtKB-UniRule"/>
</dbReference>
<dbReference type="GO" id="GO:0004828">
    <property type="term" value="F:serine-tRNA ligase activity"/>
    <property type="evidence" value="ECO:0007669"/>
    <property type="project" value="UniProtKB-UniRule"/>
</dbReference>
<dbReference type="GO" id="GO:0016260">
    <property type="term" value="P:selenocysteine biosynthetic process"/>
    <property type="evidence" value="ECO:0007669"/>
    <property type="project" value="UniProtKB-UniRule"/>
</dbReference>
<dbReference type="GO" id="GO:0006434">
    <property type="term" value="P:seryl-tRNA aminoacylation"/>
    <property type="evidence" value="ECO:0007669"/>
    <property type="project" value="UniProtKB-UniRule"/>
</dbReference>
<dbReference type="CDD" id="cd00770">
    <property type="entry name" value="SerRS_core"/>
    <property type="match status" value="1"/>
</dbReference>
<dbReference type="Gene3D" id="3.30.930.10">
    <property type="entry name" value="Bira Bifunctional Protein, Domain 2"/>
    <property type="match status" value="1"/>
</dbReference>
<dbReference type="Gene3D" id="1.10.287.40">
    <property type="entry name" value="Serine-tRNA synthetase, tRNA binding domain"/>
    <property type="match status" value="1"/>
</dbReference>
<dbReference type="HAMAP" id="MF_00176">
    <property type="entry name" value="Ser_tRNA_synth_type1"/>
    <property type="match status" value="1"/>
</dbReference>
<dbReference type="InterPro" id="IPR002314">
    <property type="entry name" value="aa-tRNA-synt_IIb"/>
</dbReference>
<dbReference type="InterPro" id="IPR006195">
    <property type="entry name" value="aa-tRNA-synth_II"/>
</dbReference>
<dbReference type="InterPro" id="IPR045864">
    <property type="entry name" value="aa-tRNA-synth_II/BPL/LPL"/>
</dbReference>
<dbReference type="InterPro" id="IPR002317">
    <property type="entry name" value="Ser-tRNA-ligase_type_1"/>
</dbReference>
<dbReference type="InterPro" id="IPR015866">
    <property type="entry name" value="Ser-tRNA-synth_1_N"/>
</dbReference>
<dbReference type="InterPro" id="IPR042103">
    <property type="entry name" value="SerRS_1_N_sf"/>
</dbReference>
<dbReference type="InterPro" id="IPR033729">
    <property type="entry name" value="SerRS_core"/>
</dbReference>
<dbReference type="InterPro" id="IPR010978">
    <property type="entry name" value="tRNA-bd_arm"/>
</dbReference>
<dbReference type="NCBIfam" id="TIGR00414">
    <property type="entry name" value="serS"/>
    <property type="match status" value="1"/>
</dbReference>
<dbReference type="PANTHER" id="PTHR43697:SF1">
    <property type="entry name" value="SERINE--TRNA LIGASE"/>
    <property type="match status" value="1"/>
</dbReference>
<dbReference type="PANTHER" id="PTHR43697">
    <property type="entry name" value="SERYL-TRNA SYNTHETASE"/>
    <property type="match status" value="1"/>
</dbReference>
<dbReference type="Pfam" id="PF02403">
    <property type="entry name" value="Seryl_tRNA_N"/>
    <property type="match status" value="1"/>
</dbReference>
<dbReference type="Pfam" id="PF00587">
    <property type="entry name" value="tRNA-synt_2b"/>
    <property type="match status" value="1"/>
</dbReference>
<dbReference type="PIRSF" id="PIRSF001529">
    <property type="entry name" value="Ser-tRNA-synth_IIa"/>
    <property type="match status" value="1"/>
</dbReference>
<dbReference type="PRINTS" id="PR00981">
    <property type="entry name" value="TRNASYNTHSER"/>
</dbReference>
<dbReference type="SUPFAM" id="SSF55681">
    <property type="entry name" value="Class II aaRS and biotin synthetases"/>
    <property type="match status" value="1"/>
</dbReference>
<dbReference type="SUPFAM" id="SSF46589">
    <property type="entry name" value="tRNA-binding arm"/>
    <property type="match status" value="1"/>
</dbReference>
<dbReference type="PROSITE" id="PS50862">
    <property type="entry name" value="AA_TRNA_LIGASE_II"/>
    <property type="match status" value="1"/>
</dbReference>
<protein>
    <recommendedName>
        <fullName evidence="1">Serine--tRNA ligase</fullName>
        <ecNumber evidence="1">6.1.1.11</ecNumber>
    </recommendedName>
    <alternativeName>
        <fullName evidence="1">Seryl-tRNA synthetase</fullName>
        <shortName evidence="1">SerRS</shortName>
    </alternativeName>
    <alternativeName>
        <fullName evidence="1">Seryl-tRNA(Ser/Sec) synthetase</fullName>
    </alternativeName>
</protein>
<sequence>MIDITLLRKDLDAVLARLSARKNPQPFLDAERFRALEAERRTLQSSTEDLQARRNQLSKQIGHLKAKGGDVAPVMDEVGGIGDTLKAGAERLEQIQGELGLMLMHVPNLPQADVPVGADETANLEVRRWGSPREFDFTVRDHVDLGAPLGLDFETSAKLSGARFSFLKGPAARLHRALAQFMLDVQTQEHGYTECYTPYIVNREVLEGTGQLPKFKEDMFWVSRGGDETQPEQYLISTSEISLTNSVREQVLAADQLPIKLTAHSPCFRSEAGSAGRDTRGLIRQHQFDKVEMVQITTPEQSDAALESMVGHAEAVLQKLGLPYRVLLLSTGDMGFGSAKTYDLEVWVPAQATYREISSCSNCEAFQARRMQTRFKNAQGKNEFVHTLNGSGLAVGRTLVAVLENYQNADGSITVPEILRPYLGGLLELRA</sequence>
<accession>B1Y0I6</accession>
<evidence type="ECO:0000255" key="1">
    <source>
        <dbReference type="HAMAP-Rule" id="MF_00176"/>
    </source>
</evidence>
<proteinExistence type="inferred from homology"/>
<gene>
    <name evidence="1" type="primary">serS</name>
    <name type="ordered locus">Lcho_0692</name>
</gene>